<comment type="similarity">
    <text evidence="5">Belongs to the phosducin family.</text>
</comment>
<dbReference type="EMBL" id="CU329671">
    <property type="protein sequence ID" value="CAB39851.2"/>
    <property type="molecule type" value="Genomic_DNA"/>
</dbReference>
<dbReference type="PIR" id="T40100">
    <property type="entry name" value="T40100"/>
</dbReference>
<dbReference type="SMR" id="Q9Y7L1"/>
<dbReference type="BioGRID" id="277012">
    <property type="interactions" value="1"/>
</dbReference>
<dbReference type="FunCoup" id="Q9Y7L1">
    <property type="interactions" value="529"/>
</dbReference>
<dbReference type="STRING" id="284812.Q9Y7L1"/>
<dbReference type="iPTMnet" id="Q9Y7L1"/>
<dbReference type="PaxDb" id="4896-SPBC2A9.09.1"/>
<dbReference type="EnsemblFungi" id="SPBC2A9.09.1">
    <property type="protein sequence ID" value="SPBC2A9.09.1:pep"/>
    <property type="gene ID" value="SPBC2A9.09"/>
</dbReference>
<dbReference type="KEGG" id="spo:2540484"/>
<dbReference type="PomBase" id="SPBC2A9.09"/>
<dbReference type="VEuPathDB" id="FungiDB:SPBC2A9.09"/>
<dbReference type="eggNOG" id="KOG3170">
    <property type="taxonomic scope" value="Eukaryota"/>
</dbReference>
<dbReference type="HOGENOM" id="CLU_072604_1_0_1"/>
<dbReference type="InParanoid" id="Q9Y7L1"/>
<dbReference type="OMA" id="FCEIRAN"/>
<dbReference type="PhylomeDB" id="Q9Y7L1"/>
<dbReference type="PRO" id="PR:Q9Y7L1"/>
<dbReference type="Proteomes" id="UP000002485">
    <property type="component" value="Chromosome II"/>
</dbReference>
<dbReference type="GO" id="GO:0005737">
    <property type="term" value="C:cytoplasm"/>
    <property type="evidence" value="ECO:0000318"/>
    <property type="project" value="GO_Central"/>
</dbReference>
<dbReference type="GO" id="GO:0006457">
    <property type="term" value="P:protein folding"/>
    <property type="evidence" value="ECO:0000318"/>
    <property type="project" value="GO_Central"/>
</dbReference>
<dbReference type="CDD" id="cd02988">
    <property type="entry name" value="Phd_like_VIAF"/>
    <property type="match status" value="1"/>
</dbReference>
<dbReference type="FunFam" id="3.40.30.10:FF:000365">
    <property type="entry name" value="Phosducin-like protein 2"/>
    <property type="match status" value="1"/>
</dbReference>
<dbReference type="Gene3D" id="3.40.30.10">
    <property type="entry name" value="Glutaredoxin"/>
    <property type="match status" value="1"/>
</dbReference>
<dbReference type="InterPro" id="IPR051498">
    <property type="entry name" value="Phosducin-like_chap/apop_reg"/>
</dbReference>
<dbReference type="InterPro" id="IPR024253">
    <property type="entry name" value="Phosducin_thioredoxin-like_dom"/>
</dbReference>
<dbReference type="InterPro" id="IPR036249">
    <property type="entry name" value="Thioredoxin-like_sf"/>
</dbReference>
<dbReference type="PANTHER" id="PTHR45809">
    <property type="entry name" value="VIRAL IAP-ASSOCIATED FACTOR HOMOLOG"/>
    <property type="match status" value="1"/>
</dbReference>
<dbReference type="PANTHER" id="PTHR45809:SF3">
    <property type="entry name" value="VIRAL IAP-ASSOCIATED FACTOR HOMOLOG"/>
    <property type="match status" value="1"/>
</dbReference>
<dbReference type="Pfam" id="PF02114">
    <property type="entry name" value="Phosducin"/>
    <property type="match status" value="1"/>
</dbReference>
<dbReference type="SUPFAM" id="SSF52833">
    <property type="entry name" value="Thioredoxin-like"/>
    <property type="match status" value="1"/>
</dbReference>
<feature type="chain" id="PRO_0000316246" description="Phosducin-like protein C2A9.09">
    <location>
        <begin position="1"/>
        <end position="233"/>
    </location>
</feature>
<feature type="domain" description="Phosducin" evidence="2">
    <location>
        <begin position="58"/>
        <end position="212"/>
    </location>
</feature>
<feature type="region of interest" description="Thioredoxin fold" evidence="1">
    <location>
        <begin position="86"/>
        <end position="233"/>
    </location>
</feature>
<feature type="region of interest" description="Disordered" evidence="3">
    <location>
        <begin position="207"/>
        <end position="233"/>
    </location>
</feature>
<feature type="compositionally biased region" description="Acidic residues" evidence="3">
    <location>
        <begin position="224"/>
        <end position="233"/>
    </location>
</feature>
<feature type="modified residue" description="Phosphoserine" evidence="4">
    <location>
        <position position="222"/>
    </location>
</feature>
<feature type="modified residue" description="Phosphoserine" evidence="4">
    <location>
        <position position="223"/>
    </location>
</feature>
<organism>
    <name type="scientific">Schizosaccharomyces pombe (strain 972 / ATCC 24843)</name>
    <name type="common">Fission yeast</name>
    <dbReference type="NCBI Taxonomy" id="284812"/>
    <lineage>
        <taxon>Eukaryota</taxon>
        <taxon>Fungi</taxon>
        <taxon>Dikarya</taxon>
        <taxon>Ascomycota</taxon>
        <taxon>Taphrinomycotina</taxon>
        <taxon>Schizosaccharomycetes</taxon>
        <taxon>Schizosaccharomycetales</taxon>
        <taxon>Schizosaccharomycetaceae</taxon>
        <taxon>Schizosaccharomyces</taxon>
    </lineage>
</organism>
<sequence length="233" mass="26246">MNPDEDTEWNDILRSKGILPEKEPDVDDVLDDALVDAKQLAHENRLENKDLDELAELEDEEDDEFLQMYRNKRMQEWKDQMSKAKFGSVYPISKPEYTAEVTDASKEVFVVVHMFQDSLPACKLLAAILERLAPMYPQIKFVKIPGKQAVENYPEAMMPTLLIYGHGDLQQQILTLATLGGMNTSVVDVAEALVRAGALKDSDIAALKDPQNAEDELGKRDSSVNDDLDDDFD</sequence>
<name>YGI9_SCHPO</name>
<keyword id="KW-0597">Phosphoprotein</keyword>
<keyword id="KW-1185">Reference proteome</keyword>
<protein>
    <recommendedName>
        <fullName>Phosducin-like protein C2A9.09</fullName>
    </recommendedName>
</protein>
<accession>Q9Y7L1</accession>
<gene>
    <name type="ORF">SPBC2A9.09</name>
</gene>
<proteinExistence type="evidence at protein level"/>
<evidence type="ECO:0000250" key="1"/>
<evidence type="ECO:0000255" key="2"/>
<evidence type="ECO:0000256" key="3">
    <source>
        <dbReference type="SAM" id="MobiDB-lite"/>
    </source>
</evidence>
<evidence type="ECO:0000269" key="4">
    <source>
    </source>
</evidence>
<evidence type="ECO:0000305" key="5"/>
<reference key="1">
    <citation type="journal article" date="2002" name="Nature">
        <title>The genome sequence of Schizosaccharomyces pombe.</title>
        <authorList>
            <person name="Wood V."/>
            <person name="Gwilliam R."/>
            <person name="Rajandream M.A."/>
            <person name="Lyne M.H."/>
            <person name="Lyne R."/>
            <person name="Stewart A."/>
            <person name="Sgouros J.G."/>
            <person name="Peat N."/>
            <person name="Hayles J."/>
            <person name="Baker S.G."/>
            <person name="Basham D."/>
            <person name="Bowman S."/>
            <person name="Brooks K."/>
            <person name="Brown D."/>
            <person name="Brown S."/>
            <person name="Chillingworth T."/>
            <person name="Churcher C.M."/>
            <person name="Collins M."/>
            <person name="Connor R."/>
            <person name="Cronin A."/>
            <person name="Davis P."/>
            <person name="Feltwell T."/>
            <person name="Fraser A."/>
            <person name="Gentles S."/>
            <person name="Goble A."/>
            <person name="Hamlin N."/>
            <person name="Harris D.E."/>
            <person name="Hidalgo J."/>
            <person name="Hodgson G."/>
            <person name="Holroyd S."/>
            <person name="Hornsby T."/>
            <person name="Howarth S."/>
            <person name="Huckle E.J."/>
            <person name="Hunt S."/>
            <person name="Jagels K."/>
            <person name="James K.D."/>
            <person name="Jones L."/>
            <person name="Jones M."/>
            <person name="Leather S."/>
            <person name="McDonald S."/>
            <person name="McLean J."/>
            <person name="Mooney P."/>
            <person name="Moule S."/>
            <person name="Mungall K.L."/>
            <person name="Murphy L.D."/>
            <person name="Niblett D."/>
            <person name="Odell C."/>
            <person name="Oliver K."/>
            <person name="O'Neil S."/>
            <person name="Pearson D."/>
            <person name="Quail M.A."/>
            <person name="Rabbinowitsch E."/>
            <person name="Rutherford K.M."/>
            <person name="Rutter S."/>
            <person name="Saunders D."/>
            <person name="Seeger K."/>
            <person name="Sharp S."/>
            <person name="Skelton J."/>
            <person name="Simmonds M.N."/>
            <person name="Squares R."/>
            <person name="Squares S."/>
            <person name="Stevens K."/>
            <person name="Taylor K."/>
            <person name="Taylor R.G."/>
            <person name="Tivey A."/>
            <person name="Walsh S.V."/>
            <person name="Warren T."/>
            <person name="Whitehead S."/>
            <person name="Woodward J.R."/>
            <person name="Volckaert G."/>
            <person name="Aert R."/>
            <person name="Robben J."/>
            <person name="Grymonprez B."/>
            <person name="Weltjens I."/>
            <person name="Vanstreels E."/>
            <person name="Rieger M."/>
            <person name="Schaefer M."/>
            <person name="Mueller-Auer S."/>
            <person name="Gabel C."/>
            <person name="Fuchs M."/>
            <person name="Duesterhoeft A."/>
            <person name="Fritzc C."/>
            <person name="Holzer E."/>
            <person name="Moestl D."/>
            <person name="Hilbert H."/>
            <person name="Borzym K."/>
            <person name="Langer I."/>
            <person name="Beck A."/>
            <person name="Lehrach H."/>
            <person name="Reinhardt R."/>
            <person name="Pohl T.M."/>
            <person name="Eger P."/>
            <person name="Zimmermann W."/>
            <person name="Wedler H."/>
            <person name="Wambutt R."/>
            <person name="Purnelle B."/>
            <person name="Goffeau A."/>
            <person name="Cadieu E."/>
            <person name="Dreano S."/>
            <person name="Gloux S."/>
            <person name="Lelaure V."/>
            <person name="Mottier S."/>
            <person name="Galibert F."/>
            <person name="Aves S.J."/>
            <person name="Xiang Z."/>
            <person name="Hunt C."/>
            <person name="Moore K."/>
            <person name="Hurst S.M."/>
            <person name="Lucas M."/>
            <person name="Rochet M."/>
            <person name="Gaillardin C."/>
            <person name="Tallada V.A."/>
            <person name="Garzon A."/>
            <person name="Thode G."/>
            <person name="Daga R.R."/>
            <person name="Cruzado L."/>
            <person name="Jimenez J."/>
            <person name="Sanchez M."/>
            <person name="del Rey F."/>
            <person name="Benito J."/>
            <person name="Dominguez A."/>
            <person name="Revuelta J.L."/>
            <person name="Moreno S."/>
            <person name="Armstrong J."/>
            <person name="Forsburg S.L."/>
            <person name="Cerutti L."/>
            <person name="Lowe T."/>
            <person name="McCombie W.R."/>
            <person name="Paulsen I."/>
            <person name="Potashkin J."/>
            <person name="Shpakovski G.V."/>
            <person name="Ussery D."/>
            <person name="Barrell B.G."/>
            <person name="Nurse P."/>
        </authorList>
    </citation>
    <scope>NUCLEOTIDE SEQUENCE [LARGE SCALE GENOMIC DNA]</scope>
    <source>
        <strain>972 / ATCC 24843</strain>
    </source>
</reference>
<reference key="2">
    <citation type="journal article" date="2008" name="J. Proteome Res.">
        <title>Phosphoproteome analysis of fission yeast.</title>
        <authorList>
            <person name="Wilson-Grady J.T."/>
            <person name="Villen J."/>
            <person name="Gygi S.P."/>
        </authorList>
    </citation>
    <scope>PHOSPHORYLATION [LARGE SCALE ANALYSIS] AT SER-222 AND SER-223</scope>
    <scope>IDENTIFICATION BY MASS SPECTROMETRY</scope>
</reference>